<protein>
    <recommendedName>
        <fullName evidence="1">Small ribosomal subunit protein uS15</fullName>
    </recommendedName>
    <alternativeName>
        <fullName evidence="3">30S ribosomal protein S15</fullName>
    </alternativeName>
</protein>
<sequence length="88" mass="10511">MLATEKKQELIDQYKRHEGDTGSPEVQIALLSERITYLTEHFRTHKKDHHSRRGLLKIVGQRRRLLDYLKSNDVERYRAIIKSLGIRR</sequence>
<name>RS15_SYNC1</name>
<comment type="function">
    <text evidence="1">One of the primary rRNA binding proteins, it binds directly to 16S rRNA where it helps nucleate assembly of the platform of the 30S subunit by binding and bridging several RNA helices of the 16S rRNA.</text>
</comment>
<comment type="function">
    <text evidence="1">Forms an intersubunit bridge (bridge B4) with the 23S rRNA of the 50S subunit in the ribosome.</text>
</comment>
<comment type="subunit">
    <text evidence="1">Part of the 30S ribosomal subunit. Forms a bridge to the 50S subunit in the 70S ribosome, contacting the 23S rRNA.</text>
</comment>
<comment type="similarity">
    <text evidence="1">Belongs to the universal ribosomal protein uS15 family.</text>
</comment>
<evidence type="ECO:0000255" key="1">
    <source>
        <dbReference type="HAMAP-Rule" id="MF_01343"/>
    </source>
</evidence>
<evidence type="ECO:0000256" key="2">
    <source>
        <dbReference type="SAM" id="MobiDB-lite"/>
    </source>
</evidence>
<evidence type="ECO:0000305" key="3"/>
<dbReference type="EMBL" id="CP000142">
    <property type="protein sequence ID" value="ABA88805.1"/>
    <property type="molecule type" value="Genomic_DNA"/>
</dbReference>
<dbReference type="RefSeq" id="WP_011341288.1">
    <property type="nucleotide sequence ID" value="NC_007498.2"/>
</dbReference>
<dbReference type="SMR" id="Q3A4A2"/>
<dbReference type="STRING" id="338963.Pcar_1560"/>
<dbReference type="KEGG" id="pca:Pcar_1560"/>
<dbReference type="eggNOG" id="COG0184">
    <property type="taxonomic scope" value="Bacteria"/>
</dbReference>
<dbReference type="HOGENOM" id="CLU_148518_0_0_7"/>
<dbReference type="OrthoDB" id="9799262at2"/>
<dbReference type="Proteomes" id="UP000002534">
    <property type="component" value="Chromosome"/>
</dbReference>
<dbReference type="GO" id="GO:0022627">
    <property type="term" value="C:cytosolic small ribosomal subunit"/>
    <property type="evidence" value="ECO:0007669"/>
    <property type="project" value="TreeGrafter"/>
</dbReference>
<dbReference type="GO" id="GO:0019843">
    <property type="term" value="F:rRNA binding"/>
    <property type="evidence" value="ECO:0007669"/>
    <property type="project" value="UniProtKB-UniRule"/>
</dbReference>
<dbReference type="GO" id="GO:0003735">
    <property type="term" value="F:structural constituent of ribosome"/>
    <property type="evidence" value="ECO:0007669"/>
    <property type="project" value="InterPro"/>
</dbReference>
<dbReference type="GO" id="GO:0006412">
    <property type="term" value="P:translation"/>
    <property type="evidence" value="ECO:0007669"/>
    <property type="project" value="UniProtKB-UniRule"/>
</dbReference>
<dbReference type="CDD" id="cd00353">
    <property type="entry name" value="Ribosomal_S15p_S13e"/>
    <property type="match status" value="1"/>
</dbReference>
<dbReference type="FunFam" id="1.10.287.10:FF:000002">
    <property type="entry name" value="30S ribosomal protein S15"/>
    <property type="match status" value="1"/>
</dbReference>
<dbReference type="Gene3D" id="6.10.250.3130">
    <property type="match status" value="1"/>
</dbReference>
<dbReference type="Gene3D" id="1.10.287.10">
    <property type="entry name" value="S15/NS1, RNA-binding"/>
    <property type="match status" value="1"/>
</dbReference>
<dbReference type="HAMAP" id="MF_01343_B">
    <property type="entry name" value="Ribosomal_uS15_B"/>
    <property type="match status" value="1"/>
</dbReference>
<dbReference type="InterPro" id="IPR000589">
    <property type="entry name" value="Ribosomal_uS15"/>
</dbReference>
<dbReference type="InterPro" id="IPR005290">
    <property type="entry name" value="Ribosomal_uS15_bac-type"/>
</dbReference>
<dbReference type="InterPro" id="IPR009068">
    <property type="entry name" value="uS15_NS1_RNA-bd_sf"/>
</dbReference>
<dbReference type="NCBIfam" id="TIGR00952">
    <property type="entry name" value="S15_bact"/>
    <property type="match status" value="1"/>
</dbReference>
<dbReference type="PANTHER" id="PTHR23321">
    <property type="entry name" value="RIBOSOMAL PROTEIN S15, BACTERIAL AND ORGANELLAR"/>
    <property type="match status" value="1"/>
</dbReference>
<dbReference type="PANTHER" id="PTHR23321:SF26">
    <property type="entry name" value="SMALL RIBOSOMAL SUBUNIT PROTEIN US15M"/>
    <property type="match status" value="1"/>
</dbReference>
<dbReference type="Pfam" id="PF00312">
    <property type="entry name" value="Ribosomal_S15"/>
    <property type="match status" value="1"/>
</dbReference>
<dbReference type="SMART" id="SM01387">
    <property type="entry name" value="Ribosomal_S15"/>
    <property type="match status" value="1"/>
</dbReference>
<dbReference type="SUPFAM" id="SSF47060">
    <property type="entry name" value="S15/NS1 RNA-binding domain"/>
    <property type="match status" value="1"/>
</dbReference>
<dbReference type="PROSITE" id="PS00362">
    <property type="entry name" value="RIBOSOMAL_S15"/>
    <property type="match status" value="1"/>
</dbReference>
<accession>Q3A4A2</accession>
<organism>
    <name type="scientific">Syntrophotalea carbinolica (strain DSM 2380 / NBRC 103641 / GraBd1)</name>
    <name type="common">Pelobacter carbinolicus</name>
    <dbReference type="NCBI Taxonomy" id="338963"/>
    <lineage>
        <taxon>Bacteria</taxon>
        <taxon>Pseudomonadati</taxon>
        <taxon>Thermodesulfobacteriota</taxon>
        <taxon>Desulfuromonadia</taxon>
        <taxon>Desulfuromonadales</taxon>
        <taxon>Syntrophotaleaceae</taxon>
        <taxon>Syntrophotalea</taxon>
    </lineage>
</organism>
<gene>
    <name evidence="1" type="primary">rpsO</name>
    <name type="ordered locus">Pcar_1560</name>
</gene>
<proteinExistence type="inferred from homology"/>
<keyword id="KW-1185">Reference proteome</keyword>
<keyword id="KW-0687">Ribonucleoprotein</keyword>
<keyword id="KW-0689">Ribosomal protein</keyword>
<keyword id="KW-0694">RNA-binding</keyword>
<keyword id="KW-0699">rRNA-binding</keyword>
<reference key="1">
    <citation type="submission" date="2005-10" db="EMBL/GenBank/DDBJ databases">
        <title>Complete sequence of Pelobacter carbinolicus DSM 2380.</title>
        <authorList>
            <person name="Copeland A."/>
            <person name="Lucas S."/>
            <person name="Lapidus A."/>
            <person name="Barry K."/>
            <person name="Detter J.C."/>
            <person name="Glavina T."/>
            <person name="Hammon N."/>
            <person name="Israni S."/>
            <person name="Pitluck S."/>
            <person name="Chertkov O."/>
            <person name="Schmutz J."/>
            <person name="Larimer F."/>
            <person name="Land M."/>
            <person name="Kyrpides N."/>
            <person name="Ivanova N."/>
            <person name="Richardson P."/>
        </authorList>
    </citation>
    <scope>NUCLEOTIDE SEQUENCE [LARGE SCALE GENOMIC DNA]</scope>
    <source>
        <strain>DSM 2380 / NBRC 103641 / GraBd1</strain>
    </source>
</reference>
<feature type="chain" id="PRO_0000115499" description="Small ribosomal subunit protein uS15">
    <location>
        <begin position="1"/>
        <end position="88"/>
    </location>
</feature>
<feature type="region of interest" description="Disordered" evidence="2">
    <location>
        <begin position="1"/>
        <end position="21"/>
    </location>
</feature>
<feature type="compositionally biased region" description="Basic and acidic residues" evidence="2">
    <location>
        <begin position="1"/>
        <end position="20"/>
    </location>
</feature>